<organism>
    <name type="scientific">Staphylococcus epidermidis (strain ATCC 12228 / FDA PCI 1200)</name>
    <dbReference type="NCBI Taxonomy" id="176280"/>
    <lineage>
        <taxon>Bacteria</taxon>
        <taxon>Bacillati</taxon>
        <taxon>Bacillota</taxon>
        <taxon>Bacilli</taxon>
        <taxon>Bacillales</taxon>
        <taxon>Staphylococcaceae</taxon>
        <taxon>Staphylococcus</taxon>
    </lineage>
</organism>
<gene>
    <name evidence="1" type="primary">mqo3</name>
    <name type="ordered locus">SE_0157</name>
</gene>
<keyword id="KW-0274">FAD</keyword>
<keyword id="KW-0285">Flavoprotein</keyword>
<keyword id="KW-0560">Oxidoreductase</keyword>
<keyword id="KW-0816">Tricarboxylic acid cycle</keyword>
<sequence length="494" mass="55608">MSEANHKNIVVVGAGIIGTSVATMLSKVSPNWHIDMFERLEGAGIESSNENNNAGTGHAALCELNYTVEQDDGSIDASKAQEINEQFELSRQFWGNLVKNGDISNPEEFIQPLPHISFVMGPTNVNFLRKRYETLKTLPMFDTIEYTEDMETMRKWMPLMMENREPGHQMAASKIDEGTDVNYGALTRKLAHYLEQKSNVSLKYNHDVVDLTQREDGKWEVVVENRETKEKVTKIADKVFIGAGGHSIPLLQKSGVKQREHLGGFPISGQFLRCTNPDIIKQHAAKVYSKEPQGKPPMTVPHLDTRYINGKQTLLFGPYANIGPKFLKFGSNLDLFESIKPYNITTMLASAVKNVPLIKYSIDQMIKTKEGCMNYLRTFIPDAKDEDWELYTAGKRVQVIKDSEQHGKGFVVFGTEVVNSDDNSMIALLGESPGASTSLSVVLEVLEKNFADDKEAWEPVVKEMVPTYGRSLINDEKLMRETRRETSKNLHLNR</sequence>
<protein>
    <recommendedName>
        <fullName evidence="1">Probable malate:quinone oxidoreductase 3</fullName>
        <ecNumber evidence="1">1.1.5.4</ecNumber>
    </recommendedName>
    <alternativeName>
        <fullName evidence="1">MQO 3</fullName>
    </alternativeName>
    <alternativeName>
        <fullName evidence="1">Malate dehydrogenase [quinone] 3</fullName>
    </alternativeName>
</protein>
<proteinExistence type="inferred from homology"/>
<dbReference type="EC" id="1.1.5.4" evidence="1"/>
<dbReference type="EMBL" id="AE015929">
    <property type="protein sequence ID" value="AAO03754.1"/>
    <property type="status" value="ALT_INIT"/>
    <property type="molecule type" value="Genomic_DNA"/>
</dbReference>
<dbReference type="RefSeq" id="NP_763712.1">
    <property type="nucleotide sequence ID" value="NC_004461.1"/>
</dbReference>
<dbReference type="SMR" id="Q8CQE8"/>
<dbReference type="KEGG" id="sep:SE_0157"/>
<dbReference type="PATRIC" id="fig|176280.10.peg.145"/>
<dbReference type="eggNOG" id="COG0579">
    <property type="taxonomic scope" value="Bacteria"/>
</dbReference>
<dbReference type="HOGENOM" id="CLU_028151_0_0_9"/>
<dbReference type="OrthoDB" id="2396113at2"/>
<dbReference type="UniPathway" id="UPA00223">
    <property type="reaction ID" value="UER01008"/>
</dbReference>
<dbReference type="Proteomes" id="UP000001411">
    <property type="component" value="Chromosome"/>
</dbReference>
<dbReference type="GO" id="GO:0047545">
    <property type="term" value="F:2-hydroxyglutarate dehydrogenase activity"/>
    <property type="evidence" value="ECO:0007669"/>
    <property type="project" value="TreeGrafter"/>
</dbReference>
<dbReference type="GO" id="GO:0008924">
    <property type="term" value="F:L-malate dehydrogenase (quinone) activity"/>
    <property type="evidence" value="ECO:0007669"/>
    <property type="project" value="UniProtKB-UniRule"/>
</dbReference>
<dbReference type="GO" id="GO:0006099">
    <property type="term" value="P:tricarboxylic acid cycle"/>
    <property type="evidence" value="ECO:0007669"/>
    <property type="project" value="UniProtKB-UniRule"/>
</dbReference>
<dbReference type="Gene3D" id="3.30.9.10">
    <property type="entry name" value="D-Amino Acid Oxidase, subunit A, domain 2"/>
    <property type="match status" value="1"/>
</dbReference>
<dbReference type="Gene3D" id="3.50.50.60">
    <property type="entry name" value="FAD/NAD(P)-binding domain"/>
    <property type="match status" value="2"/>
</dbReference>
<dbReference type="HAMAP" id="MF_00212">
    <property type="entry name" value="MQO"/>
    <property type="match status" value="1"/>
</dbReference>
<dbReference type="InterPro" id="IPR036188">
    <property type="entry name" value="FAD/NAD-bd_sf"/>
</dbReference>
<dbReference type="InterPro" id="IPR006231">
    <property type="entry name" value="MQO"/>
</dbReference>
<dbReference type="NCBIfam" id="NF040844">
    <property type="entry name" value="Lac_Quin_Ox_NO"/>
    <property type="match status" value="1"/>
</dbReference>
<dbReference type="NCBIfam" id="TIGR01320">
    <property type="entry name" value="mal_quin_oxido"/>
    <property type="match status" value="1"/>
</dbReference>
<dbReference type="NCBIfam" id="NF003606">
    <property type="entry name" value="PRK05257.2-1"/>
    <property type="match status" value="1"/>
</dbReference>
<dbReference type="NCBIfam" id="NF003611">
    <property type="entry name" value="PRK05257.3-2"/>
    <property type="match status" value="1"/>
</dbReference>
<dbReference type="NCBIfam" id="NF009875">
    <property type="entry name" value="PRK13339.1"/>
    <property type="match status" value="1"/>
</dbReference>
<dbReference type="PANTHER" id="PTHR43104">
    <property type="entry name" value="L-2-HYDROXYGLUTARATE DEHYDROGENASE, MITOCHONDRIAL"/>
    <property type="match status" value="1"/>
</dbReference>
<dbReference type="PANTHER" id="PTHR43104:SF2">
    <property type="entry name" value="L-2-HYDROXYGLUTARATE DEHYDROGENASE, MITOCHONDRIAL"/>
    <property type="match status" value="1"/>
</dbReference>
<dbReference type="Pfam" id="PF06039">
    <property type="entry name" value="Mqo"/>
    <property type="match status" value="1"/>
</dbReference>
<dbReference type="SUPFAM" id="SSF51905">
    <property type="entry name" value="FAD/NAD(P)-binding domain"/>
    <property type="match status" value="1"/>
</dbReference>
<feature type="chain" id="PRO_0000128751" description="Probable malate:quinone oxidoreductase 3">
    <location>
        <begin position="1"/>
        <end position="494"/>
    </location>
</feature>
<comment type="catalytic activity">
    <reaction evidence="1">
        <text>(S)-malate + a quinone = a quinol + oxaloacetate</text>
        <dbReference type="Rhea" id="RHEA:46012"/>
        <dbReference type="ChEBI" id="CHEBI:15589"/>
        <dbReference type="ChEBI" id="CHEBI:16452"/>
        <dbReference type="ChEBI" id="CHEBI:24646"/>
        <dbReference type="ChEBI" id="CHEBI:132124"/>
        <dbReference type="EC" id="1.1.5.4"/>
    </reaction>
</comment>
<comment type="cofactor">
    <cofactor evidence="1">
        <name>FAD</name>
        <dbReference type="ChEBI" id="CHEBI:57692"/>
    </cofactor>
</comment>
<comment type="pathway">
    <text evidence="1">Carbohydrate metabolism; tricarboxylic acid cycle; oxaloacetate from (S)-malate (quinone route): step 1/1.</text>
</comment>
<comment type="similarity">
    <text evidence="1">Belongs to the MQO family.</text>
</comment>
<comment type="sequence caution" evidence="2">
    <conflict type="erroneous initiation">
        <sequence resource="EMBL-CDS" id="AAO03754"/>
    </conflict>
</comment>
<accession>Q8CQE8</accession>
<name>MQO3_STAES</name>
<evidence type="ECO:0000255" key="1">
    <source>
        <dbReference type="HAMAP-Rule" id="MF_00212"/>
    </source>
</evidence>
<evidence type="ECO:0000305" key="2"/>
<reference key="1">
    <citation type="journal article" date="2003" name="Mol. Microbiol.">
        <title>Genome-based analysis of virulence genes in a non-biofilm-forming Staphylococcus epidermidis strain (ATCC 12228).</title>
        <authorList>
            <person name="Zhang Y.-Q."/>
            <person name="Ren S.-X."/>
            <person name="Li H.-L."/>
            <person name="Wang Y.-X."/>
            <person name="Fu G."/>
            <person name="Yang J."/>
            <person name="Qin Z.-Q."/>
            <person name="Miao Y.-G."/>
            <person name="Wang W.-Y."/>
            <person name="Chen R.-S."/>
            <person name="Shen Y."/>
            <person name="Chen Z."/>
            <person name="Yuan Z.-H."/>
            <person name="Zhao G.-P."/>
            <person name="Qu D."/>
            <person name="Danchin A."/>
            <person name="Wen Y.-M."/>
        </authorList>
    </citation>
    <scope>NUCLEOTIDE SEQUENCE [LARGE SCALE GENOMIC DNA]</scope>
    <source>
        <strain>ATCC 12228 / FDA PCI 1200</strain>
    </source>
</reference>